<dbReference type="EC" id="7.3.2.1" evidence="1"/>
<dbReference type="EMBL" id="CP000262">
    <property type="protein sequence ID" value="ABF38051.1"/>
    <property type="molecule type" value="Genomic_DNA"/>
</dbReference>
<dbReference type="SMR" id="Q1J6D2"/>
<dbReference type="KEGG" id="spi:MGAS10750_Spy1101"/>
<dbReference type="HOGENOM" id="CLU_000604_1_22_9"/>
<dbReference type="Proteomes" id="UP000002434">
    <property type="component" value="Chromosome"/>
</dbReference>
<dbReference type="GO" id="GO:0005886">
    <property type="term" value="C:plasma membrane"/>
    <property type="evidence" value="ECO:0007669"/>
    <property type="project" value="UniProtKB-SubCell"/>
</dbReference>
<dbReference type="GO" id="GO:0005524">
    <property type="term" value="F:ATP binding"/>
    <property type="evidence" value="ECO:0007669"/>
    <property type="project" value="UniProtKB-KW"/>
</dbReference>
<dbReference type="GO" id="GO:0016887">
    <property type="term" value="F:ATP hydrolysis activity"/>
    <property type="evidence" value="ECO:0007669"/>
    <property type="project" value="InterPro"/>
</dbReference>
<dbReference type="GO" id="GO:0015415">
    <property type="term" value="F:ATPase-coupled phosphate ion transmembrane transporter activity"/>
    <property type="evidence" value="ECO:0007669"/>
    <property type="project" value="UniProtKB-EC"/>
</dbReference>
<dbReference type="GO" id="GO:0035435">
    <property type="term" value="P:phosphate ion transmembrane transport"/>
    <property type="evidence" value="ECO:0007669"/>
    <property type="project" value="InterPro"/>
</dbReference>
<dbReference type="CDD" id="cd03260">
    <property type="entry name" value="ABC_PstB_phosphate_transporter"/>
    <property type="match status" value="1"/>
</dbReference>
<dbReference type="Gene3D" id="3.40.50.300">
    <property type="entry name" value="P-loop containing nucleotide triphosphate hydrolases"/>
    <property type="match status" value="1"/>
</dbReference>
<dbReference type="InterPro" id="IPR003593">
    <property type="entry name" value="AAA+_ATPase"/>
</dbReference>
<dbReference type="InterPro" id="IPR003439">
    <property type="entry name" value="ABC_transporter-like_ATP-bd"/>
</dbReference>
<dbReference type="InterPro" id="IPR017871">
    <property type="entry name" value="ABC_transporter-like_CS"/>
</dbReference>
<dbReference type="InterPro" id="IPR027417">
    <property type="entry name" value="P-loop_NTPase"/>
</dbReference>
<dbReference type="InterPro" id="IPR005670">
    <property type="entry name" value="PstB-like"/>
</dbReference>
<dbReference type="NCBIfam" id="TIGR00972">
    <property type="entry name" value="3a0107s01c2"/>
    <property type="match status" value="1"/>
</dbReference>
<dbReference type="PANTHER" id="PTHR43423">
    <property type="entry name" value="ABC TRANSPORTER I FAMILY MEMBER 17"/>
    <property type="match status" value="1"/>
</dbReference>
<dbReference type="PANTHER" id="PTHR43423:SF1">
    <property type="entry name" value="ABC TRANSPORTER I FAMILY MEMBER 17"/>
    <property type="match status" value="1"/>
</dbReference>
<dbReference type="Pfam" id="PF00005">
    <property type="entry name" value="ABC_tran"/>
    <property type="match status" value="1"/>
</dbReference>
<dbReference type="SMART" id="SM00382">
    <property type="entry name" value="AAA"/>
    <property type="match status" value="1"/>
</dbReference>
<dbReference type="SUPFAM" id="SSF52540">
    <property type="entry name" value="P-loop containing nucleoside triphosphate hydrolases"/>
    <property type="match status" value="1"/>
</dbReference>
<dbReference type="PROSITE" id="PS00211">
    <property type="entry name" value="ABC_TRANSPORTER_1"/>
    <property type="match status" value="1"/>
</dbReference>
<dbReference type="PROSITE" id="PS50893">
    <property type="entry name" value="ABC_TRANSPORTER_2"/>
    <property type="match status" value="1"/>
</dbReference>
<dbReference type="PROSITE" id="PS51238">
    <property type="entry name" value="PSTB"/>
    <property type="match status" value="1"/>
</dbReference>
<gene>
    <name evidence="1" type="primary">pstB1</name>
    <name type="ordered locus">MGAS10750_Spy1101</name>
</gene>
<keyword id="KW-0067">ATP-binding</keyword>
<keyword id="KW-1003">Cell membrane</keyword>
<keyword id="KW-0472">Membrane</keyword>
<keyword id="KW-0547">Nucleotide-binding</keyword>
<keyword id="KW-0592">Phosphate transport</keyword>
<keyword id="KW-1278">Translocase</keyword>
<keyword id="KW-0813">Transport</keyword>
<organism>
    <name type="scientific">Streptococcus pyogenes serotype M4 (strain MGAS10750)</name>
    <dbReference type="NCBI Taxonomy" id="370554"/>
    <lineage>
        <taxon>Bacteria</taxon>
        <taxon>Bacillati</taxon>
        <taxon>Bacillota</taxon>
        <taxon>Bacilli</taxon>
        <taxon>Lactobacillales</taxon>
        <taxon>Streptococcaceae</taxon>
        <taxon>Streptococcus</taxon>
    </lineage>
</organism>
<reference key="1">
    <citation type="journal article" date="2006" name="Proc. Natl. Acad. Sci. U.S.A.">
        <title>Molecular genetic anatomy of inter- and intraserotype variation in the human bacterial pathogen group A Streptococcus.</title>
        <authorList>
            <person name="Beres S.B."/>
            <person name="Richter E.W."/>
            <person name="Nagiec M.J."/>
            <person name="Sumby P."/>
            <person name="Porcella S.F."/>
            <person name="DeLeo F.R."/>
            <person name="Musser J.M."/>
        </authorList>
    </citation>
    <scope>NUCLEOTIDE SEQUENCE [LARGE SCALE GENOMIC DNA]</scope>
    <source>
        <strain>MGAS10750</strain>
    </source>
</reference>
<accession>Q1J6D2</accession>
<protein>
    <recommendedName>
        <fullName evidence="1">Phosphate import ATP-binding protein PstB 1</fullName>
        <ecNumber evidence="1">7.3.2.1</ecNumber>
    </recommendedName>
    <alternativeName>
        <fullName evidence="1">ABC phosphate transporter 1</fullName>
    </alternativeName>
    <alternativeName>
        <fullName evidence="1">Phosphate-transporting ATPase 1</fullName>
    </alternativeName>
</protein>
<evidence type="ECO:0000255" key="1">
    <source>
        <dbReference type="HAMAP-Rule" id="MF_01702"/>
    </source>
</evidence>
<proteinExistence type="inferred from homology"/>
<feature type="chain" id="PRO_0000272549" description="Phosphate import ATP-binding protein PstB 1">
    <location>
        <begin position="1"/>
        <end position="253"/>
    </location>
</feature>
<feature type="domain" description="ABC transporter" evidence="1">
    <location>
        <begin position="7"/>
        <end position="248"/>
    </location>
</feature>
<feature type="binding site" evidence="1">
    <location>
        <begin position="39"/>
        <end position="46"/>
    </location>
    <ligand>
        <name>ATP</name>
        <dbReference type="ChEBI" id="CHEBI:30616"/>
    </ligand>
</feature>
<sequence>MMTEPILQIRDLSVYYNQKKTLKDVSLDLYPNEITALIGPSGSGKSTLLRSINRMNDLNPEVTITGSIVYNGHNIYSPRTDTVDLRKEIGMVFQQPNPFPMSIYENVVYGLRLKGIRDKSILDHAVESSLKGASIWNEVKDRLHDSAVGLSGGQQQRVCIARVLATSPRIILLDEPTSALDPISAGKIEETLLLLKKDYTLAIVTRSMQQASRLSDRTGFFLEGDLLECGPTKAMFMNPKRKETEDYISGKFG</sequence>
<comment type="function">
    <text evidence="1">Part of the ABC transporter complex PstSACB involved in phosphate import. Responsible for energy coupling to the transport system.</text>
</comment>
<comment type="catalytic activity">
    <reaction evidence="1">
        <text>phosphate(out) + ATP + H2O = ADP + 2 phosphate(in) + H(+)</text>
        <dbReference type="Rhea" id="RHEA:24440"/>
        <dbReference type="ChEBI" id="CHEBI:15377"/>
        <dbReference type="ChEBI" id="CHEBI:15378"/>
        <dbReference type="ChEBI" id="CHEBI:30616"/>
        <dbReference type="ChEBI" id="CHEBI:43474"/>
        <dbReference type="ChEBI" id="CHEBI:456216"/>
        <dbReference type="EC" id="7.3.2.1"/>
    </reaction>
</comment>
<comment type="subunit">
    <text evidence="1">The complex is composed of two ATP-binding proteins (PstB), two transmembrane proteins (PstC and PstA) and a solute-binding protein (PstS).</text>
</comment>
<comment type="subcellular location">
    <subcellularLocation>
        <location evidence="1">Cell membrane</location>
        <topology evidence="1">Peripheral membrane protein</topology>
    </subcellularLocation>
</comment>
<comment type="similarity">
    <text evidence="1">Belongs to the ABC transporter superfamily. Phosphate importer (TC 3.A.1.7) family.</text>
</comment>
<name>PSTB1_STRPF</name>